<proteinExistence type="predicted"/>
<accession>Q7KWU5</accession>
<accession>Q559J0</accession>
<dbReference type="EMBL" id="AAFI02000008">
    <property type="protein sequence ID" value="EAL71177.1"/>
    <property type="molecule type" value="Genomic_DNA"/>
</dbReference>
<dbReference type="RefSeq" id="XP_645116.1">
    <property type="nucleotide sequence ID" value="XM_640024.1"/>
</dbReference>
<dbReference type="SMR" id="Q7KWU5"/>
<dbReference type="PaxDb" id="44689-DDB0168853"/>
<dbReference type="EnsemblProtists" id="EAL71177">
    <property type="protein sequence ID" value="EAL71177"/>
    <property type="gene ID" value="DDB_G0272506"/>
</dbReference>
<dbReference type="GeneID" id="8618510"/>
<dbReference type="KEGG" id="ddi:DDB_G0272506"/>
<dbReference type="dictyBase" id="DDB_G0272506"/>
<dbReference type="HOGENOM" id="CLU_2763171_0_0_1"/>
<dbReference type="InParanoid" id="Q7KWU5"/>
<dbReference type="PRO" id="PR:Q7KWU5"/>
<dbReference type="Proteomes" id="UP000002195">
    <property type="component" value="Chromosome 2"/>
</dbReference>
<dbReference type="GO" id="GO:0016020">
    <property type="term" value="C:membrane"/>
    <property type="evidence" value="ECO:0007669"/>
    <property type="project" value="UniProtKB-SubCell"/>
</dbReference>
<reference key="1">
    <citation type="journal article" date="2002" name="Nature">
        <title>Sequence and analysis of chromosome 2 of Dictyostelium discoideum.</title>
        <authorList>
            <person name="Gloeckner G."/>
            <person name="Eichinger L."/>
            <person name="Szafranski K."/>
            <person name="Pachebat J.A."/>
            <person name="Bankier A.T."/>
            <person name="Dear P.H."/>
            <person name="Lehmann R."/>
            <person name="Baumgart C."/>
            <person name="Parra G."/>
            <person name="Abril J.F."/>
            <person name="Guigo R."/>
            <person name="Kumpf K."/>
            <person name="Tunggal B."/>
            <person name="Cox E.C."/>
            <person name="Quail M.A."/>
            <person name="Platzer M."/>
            <person name="Rosenthal A."/>
            <person name="Noegel A.A."/>
        </authorList>
    </citation>
    <scope>NUCLEOTIDE SEQUENCE [LARGE SCALE GENOMIC DNA]</scope>
    <source>
        <strain>AX4</strain>
    </source>
</reference>
<reference key="2">
    <citation type="journal article" date="2005" name="Nature">
        <title>The genome of the social amoeba Dictyostelium discoideum.</title>
        <authorList>
            <person name="Eichinger L."/>
            <person name="Pachebat J.A."/>
            <person name="Gloeckner G."/>
            <person name="Rajandream M.A."/>
            <person name="Sucgang R."/>
            <person name="Berriman M."/>
            <person name="Song J."/>
            <person name="Olsen R."/>
            <person name="Szafranski K."/>
            <person name="Xu Q."/>
            <person name="Tunggal B."/>
            <person name="Kummerfeld S."/>
            <person name="Madera M."/>
            <person name="Konfortov B.A."/>
            <person name="Rivero F."/>
            <person name="Bankier A.T."/>
            <person name="Lehmann R."/>
            <person name="Hamlin N."/>
            <person name="Davies R."/>
            <person name="Gaudet P."/>
            <person name="Fey P."/>
            <person name="Pilcher K."/>
            <person name="Chen G."/>
            <person name="Saunders D."/>
            <person name="Sodergren E.J."/>
            <person name="Davis P."/>
            <person name="Kerhornou A."/>
            <person name="Nie X."/>
            <person name="Hall N."/>
            <person name="Anjard C."/>
            <person name="Hemphill L."/>
            <person name="Bason N."/>
            <person name="Farbrother P."/>
            <person name="Desany B."/>
            <person name="Just E."/>
            <person name="Morio T."/>
            <person name="Rost R."/>
            <person name="Churcher C.M."/>
            <person name="Cooper J."/>
            <person name="Haydock S."/>
            <person name="van Driessche N."/>
            <person name="Cronin A."/>
            <person name="Goodhead I."/>
            <person name="Muzny D.M."/>
            <person name="Mourier T."/>
            <person name="Pain A."/>
            <person name="Lu M."/>
            <person name="Harper D."/>
            <person name="Lindsay R."/>
            <person name="Hauser H."/>
            <person name="James K.D."/>
            <person name="Quiles M."/>
            <person name="Madan Babu M."/>
            <person name="Saito T."/>
            <person name="Buchrieser C."/>
            <person name="Wardroper A."/>
            <person name="Felder M."/>
            <person name="Thangavelu M."/>
            <person name="Johnson D."/>
            <person name="Knights A."/>
            <person name="Loulseged H."/>
            <person name="Mungall K.L."/>
            <person name="Oliver K."/>
            <person name="Price C."/>
            <person name="Quail M.A."/>
            <person name="Urushihara H."/>
            <person name="Hernandez J."/>
            <person name="Rabbinowitsch E."/>
            <person name="Steffen D."/>
            <person name="Sanders M."/>
            <person name="Ma J."/>
            <person name="Kohara Y."/>
            <person name="Sharp S."/>
            <person name="Simmonds M.N."/>
            <person name="Spiegler S."/>
            <person name="Tivey A."/>
            <person name="Sugano S."/>
            <person name="White B."/>
            <person name="Walker D."/>
            <person name="Woodward J.R."/>
            <person name="Winckler T."/>
            <person name="Tanaka Y."/>
            <person name="Shaulsky G."/>
            <person name="Schleicher M."/>
            <person name="Weinstock G.M."/>
            <person name="Rosenthal A."/>
            <person name="Cox E.C."/>
            <person name="Chisholm R.L."/>
            <person name="Gibbs R.A."/>
            <person name="Loomis W.F."/>
            <person name="Platzer M."/>
            <person name="Kay R.R."/>
            <person name="Williams J.G."/>
            <person name="Dear P.H."/>
            <person name="Noegel A.A."/>
            <person name="Barrell B.G."/>
            <person name="Kuspa A."/>
        </authorList>
    </citation>
    <scope>NUCLEOTIDE SEQUENCE [LARGE SCALE GENOMIC DNA]</scope>
    <source>
        <strain>AX4</strain>
    </source>
</reference>
<keyword id="KW-0472">Membrane</keyword>
<keyword id="KW-1185">Reference proteome</keyword>
<keyword id="KW-0812">Transmembrane</keyword>
<keyword id="KW-1133">Transmembrane helix</keyword>
<gene>
    <name type="ORF">DDB_G0272506</name>
</gene>
<protein>
    <recommendedName>
        <fullName>Putative uncharacterized protein DDB_G0272506</fullName>
    </recommendedName>
</protein>
<organism>
    <name type="scientific">Dictyostelium discoideum</name>
    <name type="common">Social amoeba</name>
    <dbReference type="NCBI Taxonomy" id="44689"/>
    <lineage>
        <taxon>Eukaryota</taxon>
        <taxon>Amoebozoa</taxon>
        <taxon>Evosea</taxon>
        <taxon>Eumycetozoa</taxon>
        <taxon>Dictyostelia</taxon>
        <taxon>Dictyosteliales</taxon>
        <taxon>Dictyosteliaceae</taxon>
        <taxon>Dictyostelium</taxon>
    </lineage>
</organism>
<feature type="chain" id="PRO_0000348171" description="Putative uncharacterized protein DDB_G0272506">
    <location>
        <begin position="1"/>
        <end position="70"/>
    </location>
</feature>
<feature type="transmembrane region" description="Helical" evidence="1">
    <location>
        <begin position="15"/>
        <end position="37"/>
    </location>
</feature>
<evidence type="ECO:0000255" key="1"/>
<evidence type="ECO:0000305" key="2"/>
<sequence length="70" mass="7976">MKDYEIVFTVFSSIIFAFLLFRLCKFCCVFCCALCNVPDNVYGRKRPRGSIVVEENEDDGNGEKEGLLNV</sequence>
<name>Y8853_DICDI</name>
<comment type="subcellular location">
    <subcellularLocation>
        <location evidence="2">Membrane</location>
        <topology evidence="2">Single-pass membrane protein</topology>
    </subcellularLocation>
</comment>